<sequence length="720" mass="80477">MENEDHNFGTSDWWPNQLDLEILDQNSQQVDPYGEDFDYAEAFEDLDLAAVKDDLEEMMTDSKDWWPADYGHYGPLFIRMAWHSAGTYRTFDGRGGAAGGRQRLPPVDSWPDNVNLDKARRLLWPIKQKYGRKLSWGDLIILAGNVALESMGFETYGFAGGRKDDYTPDEAVDWGPEDEWETTSGDRFDADGSLKWPLGNTVMGLIYVNPEGPNGEPDLEGSAKNIRESFGKMAMNDKETVALIAGGHTFGKVHGADDPEENVGAEPAAAPIEKQGLGWENEFGEGKGPDTITSGIEGPWNTTPTQWDMSYVDNLLEYEWEPEKGPGGAWQWTTKSGELNESAPGVQDPTDTEDVMMLTTDVALKDDPDYREVLETFQENPREFQQSFSKAWYKLIHRDMGPSERFLGPEVPEETMIWQDPLPDADYDLVDDEAVAALKSELLESELSIPQLVKTAWASASTYRDSDKRGGANGARIRLEPQRSWEVNEPEQLEAALSTYEDIQAEFNDARSDDMRVSLADLIVLGGNAAIEQAAADAGYDVDVPFEPGRTDATPEQTDVESFEALKPKADGFRNYLGDDAEREPEELLVDKAELLNLTADDMTVLVGGLRALGVTHGDSELGIFTDQPGTLTNDFFTTLLDMDYEWEAASEDREVFELRDRETGDVEWTGSRVDLLFGSNTRLRAIAEVYGSDADEELFVQDFVDTWSEVMKLDRFDLE</sequence>
<name>KATG_HALS3</name>
<organism>
    <name type="scientific">Halobacterium salinarum (strain ATCC 29341 / DSM 671 / R1)</name>
    <dbReference type="NCBI Taxonomy" id="478009"/>
    <lineage>
        <taxon>Archaea</taxon>
        <taxon>Methanobacteriati</taxon>
        <taxon>Methanobacteriota</taxon>
        <taxon>Stenosarchaea group</taxon>
        <taxon>Halobacteria</taxon>
        <taxon>Halobacteriales</taxon>
        <taxon>Halobacteriaceae</taxon>
        <taxon>Halobacterium</taxon>
        <taxon>Halobacterium salinarum NRC-34001</taxon>
    </lineage>
</organism>
<proteinExistence type="inferred from homology"/>
<comment type="function">
    <text evidence="1">Bifunctional enzyme with both catalase and broad-spectrum peroxidase activity.</text>
</comment>
<comment type="catalytic activity">
    <reaction evidence="1">
        <text>H2O2 + AH2 = A + 2 H2O</text>
        <dbReference type="Rhea" id="RHEA:30275"/>
        <dbReference type="ChEBI" id="CHEBI:13193"/>
        <dbReference type="ChEBI" id="CHEBI:15377"/>
        <dbReference type="ChEBI" id="CHEBI:16240"/>
        <dbReference type="ChEBI" id="CHEBI:17499"/>
        <dbReference type="EC" id="1.11.1.21"/>
    </reaction>
</comment>
<comment type="catalytic activity">
    <reaction evidence="1">
        <text>2 H2O2 = O2 + 2 H2O</text>
        <dbReference type="Rhea" id="RHEA:20309"/>
        <dbReference type="ChEBI" id="CHEBI:15377"/>
        <dbReference type="ChEBI" id="CHEBI:15379"/>
        <dbReference type="ChEBI" id="CHEBI:16240"/>
        <dbReference type="EC" id="1.11.1.21"/>
    </reaction>
</comment>
<comment type="cofactor">
    <cofactor evidence="1">
        <name>heme b</name>
        <dbReference type="ChEBI" id="CHEBI:60344"/>
    </cofactor>
    <text evidence="1">Binds 1 heme b (iron(II)-protoporphyrin IX) group per dimer.</text>
</comment>
<comment type="subunit">
    <text evidence="1">Homodimer or homotetramer.</text>
</comment>
<comment type="PTM">
    <text evidence="1">Formation of the three residue Trp-Tyr-Met cross-link is important for the catalase, but not the peroxidase activity of the enzyme.</text>
</comment>
<comment type="similarity">
    <text evidence="1">Belongs to the peroxidase family. Peroxidase/catalase subfamily.</text>
</comment>
<gene>
    <name evidence="1" type="primary">katG</name>
    <name type="ordered locus">OE_5186R</name>
</gene>
<keyword id="KW-0349">Heme</keyword>
<keyword id="KW-0376">Hydrogen peroxide</keyword>
<keyword id="KW-0408">Iron</keyword>
<keyword id="KW-0479">Metal-binding</keyword>
<keyword id="KW-0560">Oxidoreductase</keyword>
<keyword id="KW-0575">Peroxidase</keyword>
<keyword id="KW-0614">Plasmid</keyword>
<dbReference type="EC" id="1.11.1.21" evidence="1"/>
<dbReference type="EMBL" id="AM774418">
    <property type="protein sequence ID" value="CAP15539.1"/>
    <property type="molecule type" value="Genomic_DNA"/>
</dbReference>
<dbReference type="RefSeq" id="WP_010904144.1">
    <property type="nucleotide sequence ID" value="NC_010368.1"/>
</dbReference>
<dbReference type="SMR" id="B0R9V8"/>
<dbReference type="EnsemblBacteria" id="CAP15539">
    <property type="protein sequence ID" value="CAP15539"/>
    <property type="gene ID" value="OE_5186R"/>
</dbReference>
<dbReference type="GeneID" id="68695235"/>
<dbReference type="KEGG" id="hsl:OE_5186R"/>
<dbReference type="HOGENOM" id="CLU_025424_2_0_2"/>
<dbReference type="PhylomeDB" id="B0R9V8"/>
<dbReference type="Proteomes" id="UP000001321">
    <property type="component" value="Plasmid PHS3"/>
</dbReference>
<dbReference type="GO" id="GO:0005829">
    <property type="term" value="C:cytosol"/>
    <property type="evidence" value="ECO:0007669"/>
    <property type="project" value="TreeGrafter"/>
</dbReference>
<dbReference type="GO" id="GO:0004096">
    <property type="term" value="F:catalase activity"/>
    <property type="evidence" value="ECO:0007669"/>
    <property type="project" value="UniProtKB-UniRule"/>
</dbReference>
<dbReference type="GO" id="GO:0020037">
    <property type="term" value="F:heme binding"/>
    <property type="evidence" value="ECO:0007669"/>
    <property type="project" value="InterPro"/>
</dbReference>
<dbReference type="GO" id="GO:0046872">
    <property type="term" value="F:metal ion binding"/>
    <property type="evidence" value="ECO:0007669"/>
    <property type="project" value="UniProtKB-KW"/>
</dbReference>
<dbReference type="GO" id="GO:0070301">
    <property type="term" value="P:cellular response to hydrogen peroxide"/>
    <property type="evidence" value="ECO:0007669"/>
    <property type="project" value="TreeGrafter"/>
</dbReference>
<dbReference type="GO" id="GO:0042744">
    <property type="term" value="P:hydrogen peroxide catabolic process"/>
    <property type="evidence" value="ECO:0007669"/>
    <property type="project" value="UniProtKB-KW"/>
</dbReference>
<dbReference type="CDD" id="cd08200">
    <property type="entry name" value="catalase_peroxidase_2"/>
    <property type="match status" value="1"/>
</dbReference>
<dbReference type="FunFam" id="1.10.420.10:FF:000004">
    <property type="entry name" value="Catalase-peroxidase"/>
    <property type="match status" value="1"/>
</dbReference>
<dbReference type="FunFam" id="1.10.520.10:FF:000002">
    <property type="entry name" value="Catalase-peroxidase"/>
    <property type="match status" value="1"/>
</dbReference>
<dbReference type="Gene3D" id="1.10.520.10">
    <property type="match status" value="2"/>
</dbReference>
<dbReference type="Gene3D" id="1.10.420.10">
    <property type="entry name" value="Peroxidase, domain 2"/>
    <property type="match status" value="2"/>
</dbReference>
<dbReference type="HAMAP" id="MF_01961">
    <property type="entry name" value="Catal_peroxid"/>
    <property type="match status" value="1"/>
</dbReference>
<dbReference type="InterPro" id="IPR000763">
    <property type="entry name" value="Catalase_peroxidase"/>
</dbReference>
<dbReference type="InterPro" id="IPR002016">
    <property type="entry name" value="Haem_peroxidase"/>
</dbReference>
<dbReference type="InterPro" id="IPR010255">
    <property type="entry name" value="Haem_peroxidase_sf"/>
</dbReference>
<dbReference type="InterPro" id="IPR019794">
    <property type="entry name" value="Peroxidases_AS"/>
</dbReference>
<dbReference type="InterPro" id="IPR019793">
    <property type="entry name" value="Peroxidases_heam-ligand_BS"/>
</dbReference>
<dbReference type="NCBIfam" id="TIGR00198">
    <property type="entry name" value="cat_per_HPI"/>
    <property type="match status" value="1"/>
</dbReference>
<dbReference type="NCBIfam" id="NF011635">
    <property type="entry name" value="PRK15061.1"/>
    <property type="match status" value="1"/>
</dbReference>
<dbReference type="PANTHER" id="PTHR30555:SF0">
    <property type="entry name" value="CATALASE-PEROXIDASE"/>
    <property type="match status" value="1"/>
</dbReference>
<dbReference type="PANTHER" id="PTHR30555">
    <property type="entry name" value="HYDROPEROXIDASE I, BIFUNCTIONAL CATALASE-PEROXIDASE"/>
    <property type="match status" value="1"/>
</dbReference>
<dbReference type="Pfam" id="PF00141">
    <property type="entry name" value="peroxidase"/>
    <property type="match status" value="2"/>
</dbReference>
<dbReference type="PRINTS" id="PR00460">
    <property type="entry name" value="BPEROXIDASE"/>
</dbReference>
<dbReference type="PRINTS" id="PR00458">
    <property type="entry name" value="PEROXIDASE"/>
</dbReference>
<dbReference type="SUPFAM" id="SSF48113">
    <property type="entry name" value="Heme-dependent peroxidases"/>
    <property type="match status" value="2"/>
</dbReference>
<dbReference type="PROSITE" id="PS00435">
    <property type="entry name" value="PEROXIDASE_1"/>
    <property type="match status" value="1"/>
</dbReference>
<dbReference type="PROSITE" id="PS00436">
    <property type="entry name" value="PEROXIDASE_2"/>
    <property type="match status" value="1"/>
</dbReference>
<dbReference type="PROSITE" id="PS50873">
    <property type="entry name" value="PEROXIDASE_4"/>
    <property type="match status" value="1"/>
</dbReference>
<geneLocation type="plasmid">
    <name>PHS3</name>
</geneLocation>
<evidence type="ECO:0000255" key="1">
    <source>
        <dbReference type="HAMAP-Rule" id="MF_01961"/>
    </source>
</evidence>
<reference key="1">
    <citation type="journal article" date="2008" name="Genomics">
        <title>Evolution in the laboratory: the genome of Halobacterium salinarum strain R1 compared to that of strain NRC-1.</title>
        <authorList>
            <person name="Pfeiffer F."/>
            <person name="Schuster S.C."/>
            <person name="Broicher A."/>
            <person name="Falb M."/>
            <person name="Palm P."/>
            <person name="Rodewald K."/>
            <person name="Ruepp A."/>
            <person name="Soppa J."/>
            <person name="Tittor J."/>
            <person name="Oesterhelt D."/>
        </authorList>
    </citation>
    <scope>NUCLEOTIDE SEQUENCE [LARGE SCALE GENOMIC DNA]</scope>
    <source>
        <strain>ATCC 29341 / DSM 671 / R1</strain>
    </source>
</reference>
<feature type="chain" id="PRO_0000354966" description="Catalase-peroxidase">
    <location>
        <begin position="1"/>
        <end position="720"/>
    </location>
</feature>
<feature type="active site" description="Proton acceptor" evidence="1">
    <location>
        <position position="83"/>
    </location>
</feature>
<feature type="binding site" description="axial binding residue" evidence="1">
    <location>
        <position position="248"/>
    </location>
    <ligand>
        <name>heme b</name>
        <dbReference type="ChEBI" id="CHEBI:60344"/>
    </ligand>
    <ligandPart>
        <name>Fe</name>
        <dbReference type="ChEBI" id="CHEBI:18248"/>
    </ligandPart>
</feature>
<feature type="site" description="Transition state stabilizer" evidence="1">
    <location>
        <position position="79"/>
    </location>
</feature>
<feature type="cross-link" description="Tryptophyl-tyrosyl-methioninium (Trp-Tyr) (with M-233)" evidence="1">
    <location>
        <begin position="82"/>
        <end position="207"/>
    </location>
</feature>
<feature type="cross-link" description="Tryptophyl-tyrosyl-methioninium (Tyr-Met) (with W-82)" evidence="1">
    <location>
        <begin position="207"/>
        <end position="233"/>
    </location>
</feature>
<accession>B0R9V8</accession>
<protein>
    <recommendedName>
        <fullName evidence="1">Catalase-peroxidase</fullName>
        <shortName evidence="1">CP</shortName>
        <ecNumber evidence="1">1.11.1.21</ecNumber>
    </recommendedName>
    <alternativeName>
        <fullName evidence="1">Peroxidase/catalase</fullName>
    </alternativeName>
</protein>